<gene>
    <name evidence="1" type="primary">rplY</name>
    <name type="ordered locus">ECA2745</name>
</gene>
<comment type="function">
    <text evidence="1">This is one of the proteins that binds to the 5S RNA in the ribosome where it forms part of the central protuberance.</text>
</comment>
<comment type="subunit">
    <text evidence="1">Part of the 50S ribosomal subunit; part of the 5S rRNA/L5/L18/L25 subcomplex. Contacts the 5S rRNA. Binds to the 5S rRNA independently of L5 and L18.</text>
</comment>
<comment type="similarity">
    <text evidence="1">Belongs to the bacterial ribosomal protein bL25 family.</text>
</comment>
<dbReference type="EMBL" id="BX950851">
    <property type="protein sequence ID" value="CAG75645.1"/>
    <property type="molecule type" value="Genomic_DNA"/>
</dbReference>
<dbReference type="RefSeq" id="WP_011094282.1">
    <property type="nucleotide sequence ID" value="NC_004547.2"/>
</dbReference>
<dbReference type="SMR" id="Q6D3J9"/>
<dbReference type="STRING" id="218491.ECA2745"/>
<dbReference type="GeneID" id="57208564"/>
<dbReference type="KEGG" id="eca:ECA2745"/>
<dbReference type="eggNOG" id="COG1825">
    <property type="taxonomic scope" value="Bacteria"/>
</dbReference>
<dbReference type="HOGENOM" id="CLU_137946_0_0_6"/>
<dbReference type="OrthoDB" id="9806411at2"/>
<dbReference type="Proteomes" id="UP000007966">
    <property type="component" value="Chromosome"/>
</dbReference>
<dbReference type="GO" id="GO:0022625">
    <property type="term" value="C:cytosolic large ribosomal subunit"/>
    <property type="evidence" value="ECO:0007669"/>
    <property type="project" value="TreeGrafter"/>
</dbReference>
<dbReference type="GO" id="GO:0008097">
    <property type="term" value="F:5S rRNA binding"/>
    <property type="evidence" value="ECO:0007669"/>
    <property type="project" value="InterPro"/>
</dbReference>
<dbReference type="GO" id="GO:0003735">
    <property type="term" value="F:structural constituent of ribosome"/>
    <property type="evidence" value="ECO:0007669"/>
    <property type="project" value="InterPro"/>
</dbReference>
<dbReference type="GO" id="GO:0006412">
    <property type="term" value="P:translation"/>
    <property type="evidence" value="ECO:0007669"/>
    <property type="project" value="UniProtKB-UniRule"/>
</dbReference>
<dbReference type="CDD" id="cd00495">
    <property type="entry name" value="Ribosomal_L25_TL5_CTC"/>
    <property type="match status" value="1"/>
</dbReference>
<dbReference type="FunFam" id="2.40.240.10:FF:000002">
    <property type="entry name" value="50S ribosomal protein L25"/>
    <property type="match status" value="1"/>
</dbReference>
<dbReference type="Gene3D" id="2.40.240.10">
    <property type="entry name" value="Ribosomal Protein L25, Chain P"/>
    <property type="match status" value="1"/>
</dbReference>
<dbReference type="HAMAP" id="MF_01336">
    <property type="entry name" value="Ribosomal_bL25"/>
    <property type="match status" value="1"/>
</dbReference>
<dbReference type="InterPro" id="IPR020056">
    <property type="entry name" value="Rbsml_bL25/Gln-tRNA_synth_N"/>
</dbReference>
<dbReference type="InterPro" id="IPR011035">
    <property type="entry name" value="Ribosomal_bL25/Gln-tRNA_synth"/>
</dbReference>
<dbReference type="InterPro" id="IPR020055">
    <property type="entry name" value="Ribosomal_bL25_short"/>
</dbReference>
<dbReference type="InterPro" id="IPR029751">
    <property type="entry name" value="Ribosomal_L25_dom"/>
</dbReference>
<dbReference type="InterPro" id="IPR020930">
    <property type="entry name" value="Ribosomal_uL5_bac-type"/>
</dbReference>
<dbReference type="NCBIfam" id="NF004612">
    <property type="entry name" value="PRK05943.1"/>
    <property type="match status" value="1"/>
</dbReference>
<dbReference type="PANTHER" id="PTHR33284">
    <property type="entry name" value="RIBOSOMAL PROTEIN L25/GLN-TRNA SYNTHETASE, ANTI-CODON-BINDING DOMAIN-CONTAINING PROTEIN"/>
    <property type="match status" value="1"/>
</dbReference>
<dbReference type="PANTHER" id="PTHR33284:SF1">
    <property type="entry name" value="RIBOSOMAL PROTEIN L25_GLN-TRNA SYNTHETASE, ANTI-CODON-BINDING DOMAIN-CONTAINING PROTEIN"/>
    <property type="match status" value="1"/>
</dbReference>
<dbReference type="Pfam" id="PF01386">
    <property type="entry name" value="Ribosomal_L25p"/>
    <property type="match status" value="1"/>
</dbReference>
<dbReference type="SUPFAM" id="SSF50715">
    <property type="entry name" value="Ribosomal protein L25-like"/>
    <property type="match status" value="1"/>
</dbReference>
<protein>
    <recommendedName>
        <fullName evidence="1">Large ribosomal subunit protein bL25</fullName>
    </recommendedName>
    <alternativeName>
        <fullName evidence="2">50S ribosomal protein L25</fullName>
    </alternativeName>
</protein>
<proteinExistence type="inferred from homology"/>
<feature type="chain" id="PRO_0000181481" description="Large ribosomal subunit protein bL25">
    <location>
        <begin position="1"/>
        <end position="94"/>
    </location>
</feature>
<accession>Q6D3J9</accession>
<name>RL25_PECAS</name>
<keyword id="KW-1185">Reference proteome</keyword>
<keyword id="KW-0687">Ribonucleoprotein</keyword>
<keyword id="KW-0689">Ribosomal protein</keyword>
<keyword id="KW-0694">RNA-binding</keyword>
<keyword id="KW-0699">rRNA-binding</keyword>
<reference key="1">
    <citation type="journal article" date="2004" name="Proc. Natl. Acad. Sci. U.S.A.">
        <title>Genome sequence of the enterobacterial phytopathogen Erwinia carotovora subsp. atroseptica and characterization of virulence factors.</title>
        <authorList>
            <person name="Bell K.S."/>
            <person name="Sebaihia M."/>
            <person name="Pritchard L."/>
            <person name="Holden M.T.G."/>
            <person name="Hyman L.J."/>
            <person name="Holeva M.C."/>
            <person name="Thomson N.R."/>
            <person name="Bentley S.D."/>
            <person name="Churcher L.J.C."/>
            <person name="Mungall K."/>
            <person name="Atkin R."/>
            <person name="Bason N."/>
            <person name="Brooks K."/>
            <person name="Chillingworth T."/>
            <person name="Clark K."/>
            <person name="Doggett J."/>
            <person name="Fraser A."/>
            <person name="Hance Z."/>
            <person name="Hauser H."/>
            <person name="Jagels K."/>
            <person name="Moule S."/>
            <person name="Norbertczak H."/>
            <person name="Ormond D."/>
            <person name="Price C."/>
            <person name="Quail M.A."/>
            <person name="Sanders M."/>
            <person name="Walker D."/>
            <person name="Whitehead S."/>
            <person name="Salmond G.P.C."/>
            <person name="Birch P.R.J."/>
            <person name="Parkhill J."/>
            <person name="Toth I.K."/>
        </authorList>
    </citation>
    <scope>NUCLEOTIDE SEQUENCE [LARGE SCALE GENOMIC DNA]</scope>
    <source>
        <strain>SCRI 1043 / ATCC BAA-672</strain>
    </source>
</reference>
<evidence type="ECO:0000255" key="1">
    <source>
        <dbReference type="HAMAP-Rule" id="MF_01336"/>
    </source>
</evidence>
<evidence type="ECO:0000305" key="2"/>
<sequence>MITIKAEARQGQGKGASRRLRSAGKFPAIVYGGSEAPVSIELDHDSVKNQEVKEGFYGETLILSIDGKEVQVKVQAVQRHVYKPKLTHIDFVRV</sequence>
<organism>
    <name type="scientific">Pectobacterium atrosepticum (strain SCRI 1043 / ATCC BAA-672)</name>
    <name type="common">Erwinia carotovora subsp. atroseptica</name>
    <dbReference type="NCBI Taxonomy" id="218491"/>
    <lineage>
        <taxon>Bacteria</taxon>
        <taxon>Pseudomonadati</taxon>
        <taxon>Pseudomonadota</taxon>
        <taxon>Gammaproteobacteria</taxon>
        <taxon>Enterobacterales</taxon>
        <taxon>Pectobacteriaceae</taxon>
        <taxon>Pectobacterium</taxon>
    </lineage>
</organism>